<evidence type="ECO:0000255" key="1">
    <source>
        <dbReference type="HAMAP-Rule" id="MF_00274"/>
    </source>
</evidence>
<evidence type="ECO:0000256" key="2">
    <source>
        <dbReference type="SAM" id="MobiDB-lite"/>
    </source>
</evidence>
<organism>
    <name type="scientific">Yersinia pseudotuberculosis serotype IB (strain PB1/+)</name>
    <dbReference type="NCBI Taxonomy" id="502801"/>
    <lineage>
        <taxon>Bacteria</taxon>
        <taxon>Pseudomonadati</taxon>
        <taxon>Pseudomonadota</taxon>
        <taxon>Gammaproteobacteria</taxon>
        <taxon>Enterobacterales</taxon>
        <taxon>Yersiniaceae</taxon>
        <taxon>Yersinia</taxon>
    </lineage>
</organism>
<feature type="chain" id="PRO_1000114666" description="Nucleoid-associated protein YPTS_1036">
    <location>
        <begin position="1"/>
        <end position="110"/>
    </location>
</feature>
<feature type="region of interest" description="Disordered" evidence="2">
    <location>
        <begin position="90"/>
        <end position="110"/>
    </location>
</feature>
<keyword id="KW-0963">Cytoplasm</keyword>
<keyword id="KW-0238">DNA-binding</keyword>
<gene>
    <name type="ordered locus">YPTS_1036</name>
</gene>
<comment type="function">
    <text evidence="1">Binds to DNA and alters its conformation. May be involved in regulation of gene expression, nucleoid organization and DNA protection.</text>
</comment>
<comment type="subunit">
    <text evidence="1">Homodimer.</text>
</comment>
<comment type="subcellular location">
    <subcellularLocation>
        <location evidence="1">Cytoplasm</location>
        <location evidence="1">Nucleoid</location>
    </subcellularLocation>
</comment>
<comment type="similarity">
    <text evidence="1">Belongs to the YbaB/EbfC family.</text>
</comment>
<dbReference type="EMBL" id="CP001048">
    <property type="protein sequence ID" value="ACC88017.1"/>
    <property type="molecule type" value="Genomic_DNA"/>
</dbReference>
<dbReference type="RefSeq" id="WP_002208604.1">
    <property type="nucleotide sequence ID" value="NZ_CP009780.1"/>
</dbReference>
<dbReference type="SMR" id="B2K6Z3"/>
<dbReference type="KEGG" id="ypb:YPTS_1036"/>
<dbReference type="PATRIC" id="fig|502801.10.peg.378"/>
<dbReference type="GO" id="GO:0043590">
    <property type="term" value="C:bacterial nucleoid"/>
    <property type="evidence" value="ECO:0007669"/>
    <property type="project" value="UniProtKB-UniRule"/>
</dbReference>
<dbReference type="GO" id="GO:0005829">
    <property type="term" value="C:cytosol"/>
    <property type="evidence" value="ECO:0007669"/>
    <property type="project" value="TreeGrafter"/>
</dbReference>
<dbReference type="GO" id="GO:0003677">
    <property type="term" value="F:DNA binding"/>
    <property type="evidence" value="ECO:0007669"/>
    <property type="project" value="UniProtKB-UniRule"/>
</dbReference>
<dbReference type="FunFam" id="3.30.1310.10:FF:000001">
    <property type="entry name" value="Nucleoid-associated protein YbaB"/>
    <property type="match status" value="1"/>
</dbReference>
<dbReference type="Gene3D" id="3.30.1310.10">
    <property type="entry name" value="Nucleoid-associated protein YbaB-like domain"/>
    <property type="match status" value="1"/>
</dbReference>
<dbReference type="HAMAP" id="MF_00274">
    <property type="entry name" value="DNA_YbaB_EbfC"/>
    <property type="match status" value="1"/>
</dbReference>
<dbReference type="InterPro" id="IPR036894">
    <property type="entry name" value="YbaB-like_sf"/>
</dbReference>
<dbReference type="InterPro" id="IPR004401">
    <property type="entry name" value="YbaB/EbfC"/>
</dbReference>
<dbReference type="NCBIfam" id="TIGR00103">
    <property type="entry name" value="DNA_YbaB_EbfC"/>
    <property type="match status" value="1"/>
</dbReference>
<dbReference type="PANTHER" id="PTHR33449">
    <property type="entry name" value="NUCLEOID-ASSOCIATED PROTEIN YBAB"/>
    <property type="match status" value="1"/>
</dbReference>
<dbReference type="PANTHER" id="PTHR33449:SF1">
    <property type="entry name" value="NUCLEOID-ASSOCIATED PROTEIN YBAB"/>
    <property type="match status" value="1"/>
</dbReference>
<dbReference type="Pfam" id="PF02575">
    <property type="entry name" value="YbaB_DNA_bd"/>
    <property type="match status" value="1"/>
</dbReference>
<dbReference type="PIRSF" id="PIRSF004555">
    <property type="entry name" value="UCP004555"/>
    <property type="match status" value="1"/>
</dbReference>
<dbReference type="SUPFAM" id="SSF82607">
    <property type="entry name" value="YbaB-like"/>
    <property type="match status" value="1"/>
</dbReference>
<proteinExistence type="inferred from homology"/>
<accession>B2K6Z3</accession>
<sequence length="110" mass="12093">MFGKGGIGNLMKQAQQMQEKMQQMQEEVAKLEVTGESGAGLVKVTINGAHNCRRVEIDPSLLVEDDKEMLEDLIAAALNDAARRIDETQKEKMASVSNGMQLPPGFKMPF</sequence>
<name>Y1036_YERPB</name>
<reference key="1">
    <citation type="submission" date="2008-04" db="EMBL/GenBank/DDBJ databases">
        <title>Complete sequence of Yersinia pseudotuberculosis PB1/+.</title>
        <authorList>
            <person name="Copeland A."/>
            <person name="Lucas S."/>
            <person name="Lapidus A."/>
            <person name="Glavina del Rio T."/>
            <person name="Dalin E."/>
            <person name="Tice H."/>
            <person name="Bruce D."/>
            <person name="Goodwin L."/>
            <person name="Pitluck S."/>
            <person name="Munk A.C."/>
            <person name="Brettin T."/>
            <person name="Detter J.C."/>
            <person name="Han C."/>
            <person name="Tapia R."/>
            <person name="Schmutz J."/>
            <person name="Larimer F."/>
            <person name="Land M."/>
            <person name="Hauser L."/>
            <person name="Challacombe J.F."/>
            <person name="Green L."/>
            <person name="Lindler L.E."/>
            <person name="Nikolich M.P."/>
            <person name="Richardson P."/>
        </authorList>
    </citation>
    <scope>NUCLEOTIDE SEQUENCE [LARGE SCALE GENOMIC DNA]</scope>
    <source>
        <strain>PB1/+</strain>
    </source>
</reference>
<protein>
    <recommendedName>
        <fullName evidence="1">Nucleoid-associated protein YPTS_1036</fullName>
    </recommendedName>
</protein>